<sequence>MTLSLNDIKRVAKLARIEISETDAQQNLVRLSGIFDLIEQMRAVDTQGIKPMSHSQDMVQRLREDIVTESDQRTLFQSVAPQIEDGYYLVPKVIE</sequence>
<reference key="1">
    <citation type="journal article" date="2003" name="J. Bacteriol.">
        <title>Complete genome sequence of the ammonia-oxidizing bacterium and obligate chemolithoautotroph Nitrosomonas europaea.</title>
        <authorList>
            <person name="Chain P."/>
            <person name="Lamerdin J.E."/>
            <person name="Larimer F.W."/>
            <person name="Regala W."/>
            <person name="Lao V."/>
            <person name="Land M.L."/>
            <person name="Hauser L."/>
            <person name="Hooper A.B."/>
            <person name="Klotz M.G."/>
            <person name="Norton J."/>
            <person name="Sayavedra-Soto L.A."/>
            <person name="Arciero D.M."/>
            <person name="Hommes N.G."/>
            <person name="Whittaker M.M."/>
            <person name="Arp D.J."/>
        </authorList>
    </citation>
    <scope>NUCLEOTIDE SEQUENCE [LARGE SCALE GENOMIC DNA]</scope>
    <source>
        <strain>ATCC 19718 / CIP 103999 / KCTC 2705 / NBRC 14298</strain>
    </source>
</reference>
<feature type="chain" id="PRO_0000105316" description="Aspartyl/glutamyl-tRNA(Asn/Gln) amidotransferase subunit C">
    <location>
        <begin position="1"/>
        <end position="95"/>
    </location>
</feature>
<comment type="function">
    <text evidence="1">Allows the formation of correctly charged Asn-tRNA(Asn) or Gln-tRNA(Gln) through the transamidation of misacylated Asp-tRNA(Asn) or Glu-tRNA(Gln) in organisms which lack either or both of asparaginyl-tRNA or glutaminyl-tRNA synthetases. The reaction takes place in the presence of glutamine and ATP through an activated phospho-Asp-tRNA(Asn) or phospho-Glu-tRNA(Gln).</text>
</comment>
<comment type="catalytic activity">
    <reaction evidence="1">
        <text>L-glutamyl-tRNA(Gln) + L-glutamine + ATP + H2O = L-glutaminyl-tRNA(Gln) + L-glutamate + ADP + phosphate + H(+)</text>
        <dbReference type="Rhea" id="RHEA:17521"/>
        <dbReference type="Rhea" id="RHEA-COMP:9681"/>
        <dbReference type="Rhea" id="RHEA-COMP:9684"/>
        <dbReference type="ChEBI" id="CHEBI:15377"/>
        <dbReference type="ChEBI" id="CHEBI:15378"/>
        <dbReference type="ChEBI" id="CHEBI:29985"/>
        <dbReference type="ChEBI" id="CHEBI:30616"/>
        <dbReference type="ChEBI" id="CHEBI:43474"/>
        <dbReference type="ChEBI" id="CHEBI:58359"/>
        <dbReference type="ChEBI" id="CHEBI:78520"/>
        <dbReference type="ChEBI" id="CHEBI:78521"/>
        <dbReference type="ChEBI" id="CHEBI:456216"/>
    </reaction>
</comment>
<comment type="catalytic activity">
    <reaction evidence="1">
        <text>L-aspartyl-tRNA(Asn) + L-glutamine + ATP + H2O = L-asparaginyl-tRNA(Asn) + L-glutamate + ADP + phosphate + 2 H(+)</text>
        <dbReference type="Rhea" id="RHEA:14513"/>
        <dbReference type="Rhea" id="RHEA-COMP:9674"/>
        <dbReference type="Rhea" id="RHEA-COMP:9677"/>
        <dbReference type="ChEBI" id="CHEBI:15377"/>
        <dbReference type="ChEBI" id="CHEBI:15378"/>
        <dbReference type="ChEBI" id="CHEBI:29985"/>
        <dbReference type="ChEBI" id="CHEBI:30616"/>
        <dbReference type="ChEBI" id="CHEBI:43474"/>
        <dbReference type="ChEBI" id="CHEBI:58359"/>
        <dbReference type="ChEBI" id="CHEBI:78515"/>
        <dbReference type="ChEBI" id="CHEBI:78516"/>
        <dbReference type="ChEBI" id="CHEBI:456216"/>
    </reaction>
</comment>
<comment type="subunit">
    <text evidence="1">Heterotrimer of A, B and C subunits.</text>
</comment>
<comment type="similarity">
    <text evidence="1">Belongs to the GatC family.</text>
</comment>
<organism>
    <name type="scientific">Nitrosomonas europaea (strain ATCC 19718 / CIP 103999 / KCTC 2705 / NBRC 14298)</name>
    <dbReference type="NCBI Taxonomy" id="228410"/>
    <lineage>
        <taxon>Bacteria</taxon>
        <taxon>Pseudomonadati</taxon>
        <taxon>Pseudomonadota</taxon>
        <taxon>Betaproteobacteria</taxon>
        <taxon>Nitrosomonadales</taxon>
        <taxon>Nitrosomonadaceae</taxon>
        <taxon>Nitrosomonas</taxon>
    </lineage>
</organism>
<proteinExistence type="inferred from homology"/>
<evidence type="ECO:0000255" key="1">
    <source>
        <dbReference type="HAMAP-Rule" id="MF_00122"/>
    </source>
</evidence>
<accession>Q82T57</accession>
<dbReference type="EC" id="6.3.5.-" evidence="1"/>
<dbReference type="EMBL" id="AL954747">
    <property type="protein sequence ID" value="CAD85982.1"/>
    <property type="molecule type" value="Genomic_DNA"/>
</dbReference>
<dbReference type="RefSeq" id="WP_011112580.1">
    <property type="nucleotide sequence ID" value="NC_004757.1"/>
</dbReference>
<dbReference type="SMR" id="Q82T57"/>
<dbReference type="STRING" id="228410.NE2071"/>
<dbReference type="GeneID" id="87105210"/>
<dbReference type="KEGG" id="neu:NE2071"/>
<dbReference type="eggNOG" id="COG0721">
    <property type="taxonomic scope" value="Bacteria"/>
</dbReference>
<dbReference type="HOGENOM" id="CLU_105899_2_2_4"/>
<dbReference type="OrthoDB" id="9794326at2"/>
<dbReference type="PhylomeDB" id="Q82T57"/>
<dbReference type="Proteomes" id="UP000001416">
    <property type="component" value="Chromosome"/>
</dbReference>
<dbReference type="GO" id="GO:0050566">
    <property type="term" value="F:asparaginyl-tRNA synthase (glutamine-hydrolyzing) activity"/>
    <property type="evidence" value="ECO:0007669"/>
    <property type="project" value="RHEA"/>
</dbReference>
<dbReference type="GO" id="GO:0005524">
    <property type="term" value="F:ATP binding"/>
    <property type="evidence" value="ECO:0007669"/>
    <property type="project" value="UniProtKB-KW"/>
</dbReference>
<dbReference type="GO" id="GO:0050567">
    <property type="term" value="F:glutaminyl-tRNA synthase (glutamine-hydrolyzing) activity"/>
    <property type="evidence" value="ECO:0007669"/>
    <property type="project" value="UniProtKB-UniRule"/>
</dbReference>
<dbReference type="GO" id="GO:0070681">
    <property type="term" value="P:glutaminyl-tRNAGln biosynthesis via transamidation"/>
    <property type="evidence" value="ECO:0007669"/>
    <property type="project" value="TreeGrafter"/>
</dbReference>
<dbReference type="GO" id="GO:0006450">
    <property type="term" value="P:regulation of translational fidelity"/>
    <property type="evidence" value="ECO:0007669"/>
    <property type="project" value="InterPro"/>
</dbReference>
<dbReference type="GO" id="GO:0006412">
    <property type="term" value="P:translation"/>
    <property type="evidence" value="ECO:0007669"/>
    <property type="project" value="UniProtKB-UniRule"/>
</dbReference>
<dbReference type="Gene3D" id="1.10.20.60">
    <property type="entry name" value="Glu-tRNAGln amidotransferase C subunit, N-terminal domain"/>
    <property type="match status" value="1"/>
</dbReference>
<dbReference type="HAMAP" id="MF_00122">
    <property type="entry name" value="GatC"/>
    <property type="match status" value="1"/>
</dbReference>
<dbReference type="InterPro" id="IPR036113">
    <property type="entry name" value="Asp/Glu-ADT_sf_sub_c"/>
</dbReference>
<dbReference type="InterPro" id="IPR003837">
    <property type="entry name" value="GatC"/>
</dbReference>
<dbReference type="NCBIfam" id="TIGR00135">
    <property type="entry name" value="gatC"/>
    <property type="match status" value="1"/>
</dbReference>
<dbReference type="PANTHER" id="PTHR15004">
    <property type="entry name" value="GLUTAMYL-TRNA(GLN) AMIDOTRANSFERASE SUBUNIT C, MITOCHONDRIAL"/>
    <property type="match status" value="1"/>
</dbReference>
<dbReference type="PANTHER" id="PTHR15004:SF0">
    <property type="entry name" value="GLUTAMYL-TRNA(GLN) AMIDOTRANSFERASE SUBUNIT C, MITOCHONDRIAL"/>
    <property type="match status" value="1"/>
</dbReference>
<dbReference type="Pfam" id="PF02686">
    <property type="entry name" value="GatC"/>
    <property type="match status" value="1"/>
</dbReference>
<dbReference type="SUPFAM" id="SSF141000">
    <property type="entry name" value="Glu-tRNAGln amidotransferase C subunit"/>
    <property type="match status" value="1"/>
</dbReference>
<keyword id="KW-0067">ATP-binding</keyword>
<keyword id="KW-0436">Ligase</keyword>
<keyword id="KW-0547">Nucleotide-binding</keyword>
<keyword id="KW-0648">Protein biosynthesis</keyword>
<keyword id="KW-1185">Reference proteome</keyword>
<name>GATC_NITEU</name>
<gene>
    <name evidence="1" type="primary">gatC</name>
    <name type="ordered locus">NE2071</name>
</gene>
<protein>
    <recommendedName>
        <fullName evidence="1">Aspartyl/glutamyl-tRNA(Asn/Gln) amidotransferase subunit C</fullName>
        <shortName evidence="1">Asp/Glu-ADT subunit C</shortName>
        <ecNumber evidence="1">6.3.5.-</ecNumber>
    </recommendedName>
</protein>